<feature type="chain" id="PRO_0000237430" description="DNA-directed RNA polymerase subunit omega">
    <location>
        <begin position="1"/>
        <end position="71"/>
    </location>
</feature>
<evidence type="ECO:0000255" key="1">
    <source>
        <dbReference type="HAMAP-Rule" id="MF_00366"/>
    </source>
</evidence>
<comment type="function">
    <text evidence="1">Promotes RNA polymerase assembly. Latches the N- and C-terminal regions of the beta' subunit thereby facilitating its interaction with the beta and alpha subunits.</text>
</comment>
<comment type="catalytic activity">
    <reaction evidence="1">
        <text>RNA(n) + a ribonucleoside 5'-triphosphate = RNA(n+1) + diphosphate</text>
        <dbReference type="Rhea" id="RHEA:21248"/>
        <dbReference type="Rhea" id="RHEA-COMP:14527"/>
        <dbReference type="Rhea" id="RHEA-COMP:17342"/>
        <dbReference type="ChEBI" id="CHEBI:33019"/>
        <dbReference type="ChEBI" id="CHEBI:61557"/>
        <dbReference type="ChEBI" id="CHEBI:140395"/>
        <dbReference type="EC" id="2.7.7.6"/>
    </reaction>
</comment>
<comment type="subunit">
    <text evidence="1">The RNAP catalytic core consists of 2 alpha, 1 beta, 1 beta' and 1 omega subunit. When a sigma factor is associated with the core the holoenzyme is formed, which can initiate transcription.</text>
</comment>
<comment type="similarity">
    <text evidence="1">Belongs to the RNA polymerase subunit omega family.</text>
</comment>
<name>RPOZ_AROAE</name>
<keyword id="KW-0240">DNA-directed RNA polymerase</keyword>
<keyword id="KW-0548">Nucleotidyltransferase</keyword>
<keyword id="KW-1185">Reference proteome</keyword>
<keyword id="KW-0804">Transcription</keyword>
<keyword id="KW-0808">Transferase</keyword>
<organism>
    <name type="scientific">Aromatoleum aromaticum (strain DSM 19018 / LMG 30748 / EbN1)</name>
    <name type="common">Azoarcus sp. (strain EbN1)</name>
    <dbReference type="NCBI Taxonomy" id="76114"/>
    <lineage>
        <taxon>Bacteria</taxon>
        <taxon>Pseudomonadati</taxon>
        <taxon>Pseudomonadota</taxon>
        <taxon>Betaproteobacteria</taxon>
        <taxon>Rhodocyclales</taxon>
        <taxon>Rhodocyclaceae</taxon>
        <taxon>Aromatoleum</taxon>
    </lineage>
</organism>
<proteinExistence type="inferred from homology"/>
<protein>
    <recommendedName>
        <fullName evidence="1">DNA-directed RNA polymerase subunit omega</fullName>
        <shortName evidence="1">RNAP omega subunit</shortName>
        <ecNumber evidence="1">2.7.7.6</ecNumber>
    </recommendedName>
    <alternativeName>
        <fullName evidence="1">RNA polymerase omega subunit</fullName>
    </alternativeName>
    <alternativeName>
        <fullName evidence="1">Transcriptase subunit omega</fullName>
    </alternativeName>
</protein>
<sequence>MARITIEDCLKRIPNRFQLTLAATYRARQITIGSTPQVELEKSDKDKPTVIALREIAAGKVGLEVLNRGQA</sequence>
<dbReference type="EC" id="2.7.7.6" evidence="1"/>
<dbReference type="EMBL" id="CR555306">
    <property type="protein sequence ID" value="CAI08095.1"/>
    <property type="molecule type" value="Genomic_DNA"/>
</dbReference>
<dbReference type="RefSeq" id="WP_011237788.1">
    <property type="nucleotide sequence ID" value="NC_006513.1"/>
</dbReference>
<dbReference type="SMR" id="Q5P3L9"/>
<dbReference type="STRING" id="76114.ebA3495"/>
<dbReference type="KEGG" id="eba:ebA3495"/>
<dbReference type="eggNOG" id="COG1758">
    <property type="taxonomic scope" value="Bacteria"/>
</dbReference>
<dbReference type="HOGENOM" id="CLU_125406_5_2_4"/>
<dbReference type="OrthoDB" id="9796300at2"/>
<dbReference type="Proteomes" id="UP000006552">
    <property type="component" value="Chromosome"/>
</dbReference>
<dbReference type="GO" id="GO:0000428">
    <property type="term" value="C:DNA-directed RNA polymerase complex"/>
    <property type="evidence" value="ECO:0007669"/>
    <property type="project" value="UniProtKB-KW"/>
</dbReference>
<dbReference type="GO" id="GO:0003677">
    <property type="term" value="F:DNA binding"/>
    <property type="evidence" value="ECO:0007669"/>
    <property type="project" value="UniProtKB-UniRule"/>
</dbReference>
<dbReference type="GO" id="GO:0003899">
    <property type="term" value="F:DNA-directed RNA polymerase activity"/>
    <property type="evidence" value="ECO:0007669"/>
    <property type="project" value="UniProtKB-UniRule"/>
</dbReference>
<dbReference type="GO" id="GO:0006351">
    <property type="term" value="P:DNA-templated transcription"/>
    <property type="evidence" value="ECO:0007669"/>
    <property type="project" value="UniProtKB-UniRule"/>
</dbReference>
<dbReference type="Gene3D" id="3.90.940.10">
    <property type="match status" value="1"/>
</dbReference>
<dbReference type="HAMAP" id="MF_00366">
    <property type="entry name" value="RNApol_bact_RpoZ"/>
    <property type="match status" value="1"/>
</dbReference>
<dbReference type="InterPro" id="IPR003716">
    <property type="entry name" value="DNA-dir_RNA_pol_omega"/>
</dbReference>
<dbReference type="InterPro" id="IPR006110">
    <property type="entry name" value="Pol_omega/Rpo6/RPB6"/>
</dbReference>
<dbReference type="InterPro" id="IPR036161">
    <property type="entry name" value="RPB6/omega-like_sf"/>
</dbReference>
<dbReference type="NCBIfam" id="TIGR00690">
    <property type="entry name" value="rpoZ"/>
    <property type="match status" value="1"/>
</dbReference>
<dbReference type="PANTHER" id="PTHR34476">
    <property type="entry name" value="DNA-DIRECTED RNA POLYMERASE SUBUNIT OMEGA"/>
    <property type="match status" value="1"/>
</dbReference>
<dbReference type="PANTHER" id="PTHR34476:SF1">
    <property type="entry name" value="DNA-DIRECTED RNA POLYMERASE SUBUNIT OMEGA"/>
    <property type="match status" value="1"/>
</dbReference>
<dbReference type="Pfam" id="PF01192">
    <property type="entry name" value="RNA_pol_Rpb6"/>
    <property type="match status" value="1"/>
</dbReference>
<dbReference type="SMART" id="SM01409">
    <property type="entry name" value="RNA_pol_Rpb6"/>
    <property type="match status" value="1"/>
</dbReference>
<dbReference type="SUPFAM" id="SSF63562">
    <property type="entry name" value="RPB6/omega subunit-like"/>
    <property type="match status" value="1"/>
</dbReference>
<gene>
    <name evidence="1" type="primary">rpoZ</name>
    <name type="ordered locus">AZOSEA19700</name>
    <name type="ORF">ebA3495</name>
</gene>
<accession>Q5P3L9</accession>
<reference key="1">
    <citation type="journal article" date="2005" name="Arch. Microbiol.">
        <title>The genome sequence of an anaerobic aromatic-degrading denitrifying bacterium, strain EbN1.</title>
        <authorList>
            <person name="Rabus R."/>
            <person name="Kube M."/>
            <person name="Heider J."/>
            <person name="Beck A."/>
            <person name="Heitmann K."/>
            <person name="Widdel F."/>
            <person name="Reinhardt R."/>
        </authorList>
    </citation>
    <scope>NUCLEOTIDE SEQUENCE [LARGE SCALE GENOMIC DNA]</scope>
    <source>
        <strain>DSM 19018 / LMG 30748 / EbN1</strain>
    </source>
</reference>